<gene>
    <name type="primary">ND1</name>
</gene>
<dbReference type="EC" id="7.1.1.2"/>
<dbReference type="EMBL" id="X05286">
    <property type="protein sequence ID" value="CAA28904.1"/>
    <property type="molecule type" value="Genomic_DNA"/>
</dbReference>
<dbReference type="EMBL" id="X80245">
    <property type="protein sequence ID" value="CAA56530.1"/>
    <property type="molecule type" value="Genomic_DNA"/>
</dbReference>
<dbReference type="PIR" id="S06214">
    <property type="entry name" value="S06214"/>
</dbReference>
<dbReference type="RefSeq" id="NP_007302.1">
    <property type="nucleotide sequence ID" value="NC_001712.1"/>
</dbReference>
<dbReference type="SMR" id="P09045"/>
<dbReference type="GeneID" id="807966"/>
<dbReference type="CTD" id="4535"/>
<dbReference type="GO" id="GO:0005743">
    <property type="term" value="C:mitochondrial inner membrane"/>
    <property type="evidence" value="ECO:0007669"/>
    <property type="project" value="UniProtKB-SubCell"/>
</dbReference>
<dbReference type="GO" id="GO:0008137">
    <property type="term" value="F:NADH dehydrogenase (ubiquinone) activity"/>
    <property type="evidence" value="ECO:0007669"/>
    <property type="project" value="UniProtKB-EC"/>
</dbReference>
<dbReference type="GO" id="GO:0009060">
    <property type="term" value="P:aerobic respiration"/>
    <property type="evidence" value="ECO:0007669"/>
    <property type="project" value="TreeGrafter"/>
</dbReference>
<dbReference type="HAMAP" id="MF_01350">
    <property type="entry name" value="NDH1_NuoH"/>
    <property type="match status" value="1"/>
</dbReference>
<dbReference type="InterPro" id="IPR001694">
    <property type="entry name" value="NADH_UbQ_OxRdtase_su1/FPO"/>
</dbReference>
<dbReference type="InterPro" id="IPR018086">
    <property type="entry name" value="NADH_UbQ_OxRdtase_su1_CS"/>
</dbReference>
<dbReference type="PANTHER" id="PTHR11432">
    <property type="entry name" value="NADH DEHYDROGENASE SUBUNIT 1"/>
    <property type="match status" value="1"/>
</dbReference>
<dbReference type="PANTHER" id="PTHR11432:SF3">
    <property type="entry name" value="NADH-UBIQUINONE OXIDOREDUCTASE CHAIN 1"/>
    <property type="match status" value="1"/>
</dbReference>
<dbReference type="Pfam" id="PF00146">
    <property type="entry name" value="NADHdh"/>
    <property type="match status" value="1"/>
</dbReference>
<dbReference type="PROSITE" id="PS00667">
    <property type="entry name" value="COMPLEX1_ND1_1"/>
    <property type="match status" value="1"/>
</dbReference>
<dbReference type="PROSITE" id="PS00668">
    <property type="entry name" value="COMPLEX1_ND1_2"/>
    <property type="match status" value="1"/>
</dbReference>
<comment type="function">
    <text evidence="1">Core subunit of the mitochondrial membrane respiratory chain NADH dehydrogenase (Complex I) that is believed to belong to the minimal assembly required for catalysis. Complex I functions in the transfer of electrons from NADH to the respiratory chain. The immediate electron acceptor for the enzyme is believed to be ubiquinone (By similarity).</text>
</comment>
<comment type="catalytic activity">
    <reaction>
        <text>a ubiquinone + NADH + 5 H(+)(in) = a ubiquinol + NAD(+) + 4 H(+)(out)</text>
        <dbReference type="Rhea" id="RHEA:29091"/>
        <dbReference type="Rhea" id="RHEA-COMP:9565"/>
        <dbReference type="Rhea" id="RHEA-COMP:9566"/>
        <dbReference type="ChEBI" id="CHEBI:15378"/>
        <dbReference type="ChEBI" id="CHEBI:16389"/>
        <dbReference type="ChEBI" id="CHEBI:17976"/>
        <dbReference type="ChEBI" id="CHEBI:57540"/>
        <dbReference type="ChEBI" id="CHEBI:57945"/>
        <dbReference type="EC" id="7.1.1.2"/>
    </reaction>
</comment>
<comment type="subcellular location">
    <subcellularLocation>
        <location evidence="1">Mitochondrion inner membrane</location>
        <topology evidence="1">Multi-pass membrane protein</topology>
    </subcellularLocation>
</comment>
<comment type="similarity">
    <text evidence="3">Belongs to the complex I subunit 1 family.</text>
</comment>
<protein>
    <recommendedName>
        <fullName>NADH-ubiquinone oxidoreductase chain 1</fullName>
        <ecNumber>7.1.1.2</ecNumber>
    </recommendedName>
    <alternativeName>
        <fullName>NADH dehydrogenase subunit 1</fullName>
    </alternativeName>
</protein>
<evidence type="ECO:0000250" key="1"/>
<evidence type="ECO:0000255" key="2"/>
<evidence type="ECO:0000305" key="3"/>
<reference key="1">
    <citation type="journal article" date="1987" name="Curr. Genet.">
        <title>Structure of the cloned Locusta migratoria mitochondrial genome: restriction mapping and sequence of its ND-1 (URF-1) gene.</title>
        <authorList>
            <person name="McCracken A."/>
            <person name="Uhlenbusch I."/>
            <person name="Gellissen G."/>
        </authorList>
    </citation>
    <scope>NUCLEOTIDE SEQUENCE [GENOMIC DNA]</scope>
</reference>
<reference key="2">
    <citation type="journal article" date="1995" name="J. Mol. Evol.">
        <title>The sequence, organization, and evolution of the Locusta migratoria mitochondrial genome.</title>
        <authorList>
            <person name="Flook P.K."/>
            <person name="Rowell C.H.F."/>
            <person name="Gellissen G."/>
        </authorList>
    </citation>
    <scope>NUCLEOTIDE SEQUENCE [GENOMIC DNA]</scope>
</reference>
<keyword id="KW-0249">Electron transport</keyword>
<keyword id="KW-0472">Membrane</keyword>
<keyword id="KW-0496">Mitochondrion</keyword>
<keyword id="KW-0999">Mitochondrion inner membrane</keyword>
<keyword id="KW-0520">NAD</keyword>
<keyword id="KW-0679">Respiratory chain</keyword>
<keyword id="KW-1278">Translocase</keyword>
<keyword id="KW-0812">Transmembrane</keyword>
<keyword id="KW-1133">Transmembrane helix</keyword>
<keyword id="KW-0813">Transport</keyword>
<keyword id="KW-0830">Ubiquinone</keyword>
<organism>
    <name type="scientific">Locusta migratoria</name>
    <name type="common">Migratory locust</name>
    <dbReference type="NCBI Taxonomy" id="7004"/>
    <lineage>
        <taxon>Eukaryota</taxon>
        <taxon>Metazoa</taxon>
        <taxon>Ecdysozoa</taxon>
        <taxon>Arthropoda</taxon>
        <taxon>Hexapoda</taxon>
        <taxon>Insecta</taxon>
        <taxon>Pterygota</taxon>
        <taxon>Neoptera</taxon>
        <taxon>Polyneoptera</taxon>
        <taxon>Orthoptera</taxon>
        <taxon>Caelifera</taxon>
        <taxon>Acrididea</taxon>
        <taxon>Acridomorpha</taxon>
        <taxon>Acridoidea</taxon>
        <taxon>Acrididae</taxon>
        <taxon>Oedipodinae</taxon>
        <taxon>Locusta</taxon>
    </lineage>
</organism>
<sequence length="313" mass="36445">MMYDLFMFVLNFLLLIICVLISVAFLTLMERKVLGYIHIRKGPNKVGFLGIPQPFSDAIKLFCKEQPIPFMSNYFLYYFSPVFNLMLSLLIWVIFPYLTYMCSFPYGFYFLCCTSLSVYTFMIAGWSSNSNYALLGSLRSVAQTISYEVSLALILLSLIILIGSFNMLYFMNFQLYCWFIVFSFPLALSFFGSSLAETNRTPFDFAEGESELVSGFNIEYSTGGFTLIFLAEYSSIIFMSMLFSLIFLGGDFYSFYFFFKLSLVSFFFVWVRGTLPRFRYDKLMYLAWKSYLPLSLNFLFFFIGLSVMFFSII</sequence>
<geneLocation type="mitochondrion"/>
<proteinExistence type="inferred from homology"/>
<feature type="chain" id="PRO_0000117420" description="NADH-ubiquinone oxidoreductase chain 1">
    <location>
        <begin position="1"/>
        <end position="313"/>
    </location>
</feature>
<feature type="transmembrane region" description="Helical" evidence="2">
    <location>
        <begin position="5"/>
        <end position="25"/>
    </location>
</feature>
<feature type="transmembrane region" description="Helical" evidence="2">
    <location>
        <begin position="75"/>
        <end position="95"/>
    </location>
</feature>
<feature type="transmembrane region" description="Helical" evidence="2">
    <location>
        <begin position="104"/>
        <end position="124"/>
    </location>
</feature>
<feature type="transmembrane region" description="Helical" evidence="2">
    <location>
        <begin position="151"/>
        <end position="171"/>
    </location>
</feature>
<feature type="transmembrane region" description="Helical" evidence="2">
    <location>
        <begin position="175"/>
        <end position="195"/>
    </location>
</feature>
<feature type="transmembrane region" description="Helical" evidence="2">
    <location>
        <begin position="227"/>
        <end position="247"/>
    </location>
</feature>
<feature type="transmembrane region" description="Helical" evidence="2">
    <location>
        <begin position="251"/>
        <end position="271"/>
    </location>
</feature>
<feature type="transmembrane region" description="Helical" evidence="2">
    <location>
        <begin position="293"/>
        <end position="313"/>
    </location>
</feature>
<name>NU1M_LOCMI</name>
<accession>P09045</accession>